<dbReference type="EC" id="6.1.1.23" evidence="1"/>
<dbReference type="EMBL" id="CP000488">
    <property type="protein sequence ID" value="ABL02163.1"/>
    <property type="molecule type" value="Genomic_DNA"/>
</dbReference>
<dbReference type="RefSeq" id="WP_011737788.1">
    <property type="nucleotide sequence ID" value="NC_008610.1"/>
</dbReference>
<dbReference type="SMR" id="A1AW56"/>
<dbReference type="STRING" id="413404.Rmag_0396"/>
<dbReference type="KEGG" id="rma:Rmag_0396"/>
<dbReference type="eggNOG" id="COG0173">
    <property type="taxonomic scope" value="Bacteria"/>
</dbReference>
<dbReference type="HOGENOM" id="CLU_014330_3_2_6"/>
<dbReference type="OrthoDB" id="9802326at2"/>
<dbReference type="Proteomes" id="UP000002587">
    <property type="component" value="Chromosome"/>
</dbReference>
<dbReference type="GO" id="GO:0005737">
    <property type="term" value="C:cytoplasm"/>
    <property type="evidence" value="ECO:0007669"/>
    <property type="project" value="UniProtKB-SubCell"/>
</dbReference>
<dbReference type="GO" id="GO:0004815">
    <property type="term" value="F:aspartate-tRNA ligase activity"/>
    <property type="evidence" value="ECO:0007669"/>
    <property type="project" value="UniProtKB-UniRule"/>
</dbReference>
<dbReference type="GO" id="GO:0050560">
    <property type="term" value="F:aspartate-tRNA(Asn) ligase activity"/>
    <property type="evidence" value="ECO:0007669"/>
    <property type="project" value="UniProtKB-EC"/>
</dbReference>
<dbReference type="GO" id="GO:0005524">
    <property type="term" value="F:ATP binding"/>
    <property type="evidence" value="ECO:0007669"/>
    <property type="project" value="UniProtKB-UniRule"/>
</dbReference>
<dbReference type="GO" id="GO:0003676">
    <property type="term" value="F:nucleic acid binding"/>
    <property type="evidence" value="ECO:0007669"/>
    <property type="project" value="InterPro"/>
</dbReference>
<dbReference type="GO" id="GO:0006422">
    <property type="term" value="P:aspartyl-tRNA aminoacylation"/>
    <property type="evidence" value="ECO:0007669"/>
    <property type="project" value="UniProtKB-UniRule"/>
</dbReference>
<dbReference type="CDD" id="cd00777">
    <property type="entry name" value="AspRS_core"/>
    <property type="match status" value="1"/>
</dbReference>
<dbReference type="CDD" id="cd04317">
    <property type="entry name" value="EcAspRS_like_N"/>
    <property type="match status" value="1"/>
</dbReference>
<dbReference type="Gene3D" id="3.30.930.10">
    <property type="entry name" value="Bira Bifunctional Protein, Domain 2"/>
    <property type="match status" value="1"/>
</dbReference>
<dbReference type="Gene3D" id="3.30.1360.30">
    <property type="entry name" value="GAD-like domain"/>
    <property type="match status" value="1"/>
</dbReference>
<dbReference type="Gene3D" id="2.40.50.140">
    <property type="entry name" value="Nucleic acid-binding proteins"/>
    <property type="match status" value="1"/>
</dbReference>
<dbReference type="HAMAP" id="MF_00044">
    <property type="entry name" value="Asp_tRNA_synth_type1"/>
    <property type="match status" value="1"/>
</dbReference>
<dbReference type="InterPro" id="IPR004364">
    <property type="entry name" value="Aa-tRNA-synt_II"/>
</dbReference>
<dbReference type="InterPro" id="IPR006195">
    <property type="entry name" value="aa-tRNA-synth_II"/>
</dbReference>
<dbReference type="InterPro" id="IPR045864">
    <property type="entry name" value="aa-tRNA-synth_II/BPL/LPL"/>
</dbReference>
<dbReference type="InterPro" id="IPR004524">
    <property type="entry name" value="Asp-tRNA-ligase_1"/>
</dbReference>
<dbReference type="InterPro" id="IPR047089">
    <property type="entry name" value="Asp-tRNA-ligase_1_N"/>
</dbReference>
<dbReference type="InterPro" id="IPR002312">
    <property type="entry name" value="Asp/Asn-tRNA-synth_IIb"/>
</dbReference>
<dbReference type="InterPro" id="IPR047090">
    <property type="entry name" value="AspRS_core"/>
</dbReference>
<dbReference type="InterPro" id="IPR004115">
    <property type="entry name" value="GAD-like_sf"/>
</dbReference>
<dbReference type="InterPro" id="IPR029351">
    <property type="entry name" value="GAD_dom"/>
</dbReference>
<dbReference type="InterPro" id="IPR012340">
    <property type="entry name" value="NA-bd_OB-fold"/>
</dbReference>
<dbReference type="InterPro" id="IPR004365">
    <property type="entry name" value="NA-bd_OB_tRNA"/>
</dbReference>
<dbReference type="NCBIfam" id="TIGR00459">
    <property type="entry name" value="aspS_bact"/>
    <property type="match status" value="1"/>
</dbReference>
<dbReference type="NCBIfam" id="NF001750">
    <property type="entry name" value="PRK00476.1"/>
    <property type="match status" value="1"/>
</dbReference>
<dbReference type="PANTHER" id="PTHR22594:SF5">
    <property type="entry name" value="ASPARTATE--TRNA LIGASE, MITOCHONDRIAL"/>
    <property type="match status" value="1"/>
</dbReference>
<dbReference type="PANTHER" id="PTHR22594">
    <property type="entry name" value="ASPARTYL/LYSYL-TRNA SYNTHETASE"/>
    <property type="match status" value="1"/>
</dbReference>
<dbReference type="Pfam" id="PF02938">
    <property type="entry name" value="GAD"/>
    <property type="match status" value="1"/>
</dbReference>
<dbReference type="Pfam" id="PF00152">
    <property type="entry name" value="tRNA-synt_2"/>
    <property type="match status" value="1"/>
</dbReference>
<dbReference type="Pfam" id="PF01336">
    <property type="entry name" value="tRNA_anti-codon"/>
    <property type="match status" value="1"/>
</dbReference>
<dbReference type="PRINTS" id="PR01042">
    <property type="entry name" value="TRNASYNTHASP"/>
</dbReference>
<dbReference type="SUPFAM" id="SSF55681">
    <property type="entry name" value="Class II aaRS and biotin synthetases"/>
    <property type="match status" value="1"/>
</dbReference>
<dbReference type="SUPFAM" id="SSF55261">
    <property type="entry name" value="GAD domain-like"/>
    <property type="match status" value="1"/>
</dbReference>
<dbReference type="SUPFAM" id="SSF50249">
    <property type="entry name" value="Nucleic acid-binding proteins"/>
    <property type="match status" value="1"/>
</dbReference>
<dbReference type="PROSITE" id="PS50862">
    <property type="entry name" value="AA_TRNA_LIGASE_II"/>
    <property type="match status" value="1"/>
</dbReference>
<keyword id="KW-0030">Aminoacyl-tRNA synthetase</keyword>
<keyword id="KW-0067">ATP-binding</keyword>
<keyword id="KW-0963">Cytoplasm</keyword>
<keyword id="KW-0436">Ligase</keyword>
<keyword id="KW-0547">Nucleotide-binding</keyword>
<keyword id="KW-0648">Protein biosynthesis</keyword>
<organism>
    <name type="scientific">Ruthia magnifica subsp. Calyptogena magnifica</name>
    <dbReference type="NCBI Taxonomy" id="413404"/>
    <lineage>
        <taxon>Bacteria</taxon>
        <taxon>Pseudomonadati</taxon>
        <taxon>Pseudomonadota</taxon>
        <taxon>Gammaproteobacteria</taxon>
        <taxon>Candidatus Pseudothioglobaceae</taxon>
        <taxon>Candidatus Ruthturnera</taxon>
    </lineage>
</organism>
<sequence>MRTHFCGELNKDNIGQTVEIYGWVNRRRDHGGVIFLDMRDKHGIAQVVINPDNADFSLAETVRNEFVLKITGTIIARGEGLTNPKLSTGKIEIKAQNIEILNTSKPVPFQIDATDTSEEVRLRYRYLDLRSDTMQNRLRLRSRVTRYMREFMDEHDFLDIETPFLTKATPEGARDYLVPSRTHSGKFFALPQSPQLFKQLLMMSGFERYYQIVKCFRDEDLRADRQPEFTQLDVETSFMSENEIMTMMEKMTRGLFKLVINVDLGDNFPTITYADSMAKYGLDRPDMRISMQIVSIDKIMQGVDFKVFSGPANYDDSRVAALKVPNGASISRKNIDKYTKYVSIYGAKGLAYIKLNKNGPASPILKFLGDEVIAKVIEMTDAKTGDIIFFGADKSKIVNEALGNLREQLAKDLDLFDTQWAPIWVVDFPMFEVGDDGSLNTTHHPFTAPSVDAKTLEKTATTALSKAYDLVINGSEVGGGSIRIHQIDMQKTVLKLLGISDQEIQDKFGFFLNALEYGCPPHGGMAFGLDRLMMIMTGANSIRDVVAFPKTQTAACLLTDTPTSISRKLLRELSVKINLPEKD</sequence>
<evidence type="ECO:0000255" key="1">
    <source>
        <dbReference type="HAMAP-Rule" id="MF_00044"/>
    </source>
</evidence>
<protein>
    <recommendedName>
        <fullName evidence="1">Aspartate--tRNA(Asp/Asn) ligase</fullName>
        <ecNumber evidence="1">6.1.1.23</ecNumber>
    </recommendedName>
    <alternativeName>
        <fullName evidence="1">Aspartyl-tRNA synthetase</fullName>
        <shortName evidence="1">AspRS</shortName>
    </alternativeName>
    <alternativeName>
        <fullName evidence="1">Non-discriminating aspartyl-tRNA synthetase</fullName>
        <shortName evidence="1">ND-AspRS</shortName>
    </alternativeName>
</protein>
<name>SYDND_RUTMC</name>
<feature type="chain" id="PRO_1000006749" description="Aspartate--tRNA(Asp/Asn) ligase">
    <location>
        <begin position="1"/>
        <end position="583"/>
    </location>
</feature>
<feature type="region of interest" description="Aspartate" evidence="1">
    <location>
        <begin position="195"/>
        <end position="198"/>
    </location>
</feature>
<feature type="binding site" evidence="1">
    <location>
        <position position="171"/>
    </location>
    <ligand>
        <name>L-aspartate</name>
        <dbReference type="ChEBI" id="CHEBI:29991"/>
    </ligand>
</feature>
<feature type="binding site" evidence="1">
    <location>
        <begin position="217"/>
        <end position="219"/>
    </location>
    <ligand>
        <name>ATP</name>
        <dbReference type="ChEBI" id="CHEBI:30616"/>
    </ligand>
</feature>
<feature type="binding site" evidence="1">
    <location>
        <position position="217"/>
    </location>
    <ligand>
        <name>L-aspartate</name>
        <dbReference type="ChEBI" id="CHEBI:29991"/>
    </ligand>
</feature>
<feature type="binding site" evidence="1">
    <location>
        <position position="226"/>
    </location>
    <ligand>
        <name>ATP</name>
        <dbReference type="ChEBI" id="CHEBI:30616"/>
    </ligand>
</feature>
<feature type="binding site" evidence="1">
    <location>
        <position position="443"/>
    </location>
    <ligand>
        <name>L-aspartate</name>
        <dbReference type="ChEBI" id="CHEBI:29991"/>
    </ligand>
</feature>
<feature type="binding site" evidence="1">
    <location>
        <position position="476"/>
    </location>
    <ligand>
        <name>ATP</name>
        <dbReference type="ChEBI" id="CHEBI:30616"/>
    </ligand>
</feature>
<feature type="binding site" evidence="1">
    <location>
        <position position="483"/>
    </location>
    <ligand>
        <name>L-aspartate</name>
        <dbReference type="ChEBI" id="CHEBI:29991"/>
    </ligand>
</feature>
<feature type="binding site" evidence="1">
    <location>
        <begin position="528"/>
        <end position="531"/>
    </location>
    <ligand>
        <name>ATP</name>
        <dbReference type="ChEBI" id="CHEBI:30616"/>
    </ligand>
</feature>
<feature type="site" description="Important for tRNA non-discrimination" evidence="1">
    <location>
        <position position="30"/>
    </location>
</feature>
<feature type="site" description="Important for tRNA non-discrimination" evidence="1">
    <location>
        <position position="80"/>
    </location>
</feature>
<accession>A1AW56</accession>
<comment type="function">
    <text evidence="1">Aspartyl-tRNA synthetase with relaxed tRNA specificity since it is able to aspartylate not only its cognate tRNA(Asp) but also tRNA(Asn). Reaction proceeds in two steps: L-aspartate is first activated by ATP to form Asp-AMP and then transferred to the acceptor end of tRNA(Asp/Asn).</text>
</comment>
<comment type="catalytic activity">
    <reaction evidence="1">
        <text>tRNA(Asx) + L-aspartate + ATP = L-aspartyl-tRNA(Asx) + AMP + diphosphate</text>
        <dbReference type="Rhea" id="RHEA:18349"/>
        <dbReference type="Rhea" id="RHEA-COMP:9710"/>
        <dbReference type="Rhea" id="RHEA-COMP:9711"/>
        <dbReference type="ChEBI" id="CHEBI:29991"/>
        <dbReference type="ChEBI" id="CHEBI:30616"/>
        <dbReference type="ChEBI" id="CHEBI:33019"/>
        <dbReference type="ChEBI" id="CHEBI:78442"/>
        <dbReference type="ChEBI" id="CHEBI:78516"/>
        <dbReference type="ChEBI" id="CHEBI:456215"/>
        <dbReference type="EC" id="6.1.1.23"/>
    </reaction>
</comment>
<comment type="subunit">
    <text evidence="1">Homodimer.</text>
</comment>
<comment type="subcellular location">
    <subcellularLocation>
        <location evidence="1">Cytoplasm</location>
    </subcellularLocation>
</comment>
<comment type="similarity">
    <text evidence="1">Belongs to the class-II aminoacyl-tRNA synthetase family. Type 1 subfamily.</text>
</comment>
<reference key="1">
    <citation type="journal article" date="2007" name="Science">
        <title>The Calyptogena magnifica chemoautotrophic symbiont genome.</title>
        <authorList>
            <person name="Newton I.L.G."/>
            <person name="Woyke T."/>
            <person name="Auchtung T.A."/>
            <person name="Dilly G.F."/>
            <person name="Dutton R.J."/>
            <person name="Fisher M.C."/>
            <person name="Fontanez K.M."/>
            <person name="Lau E."/>
            <person name="Stewart F.J."/>
            <person name="Richardson P.M."/>
            <person name="Barry K.W."/>
            <person name="Saunders E."/>
            <person name="Detter J.C."/>
            <person name="Wu D."/>
            <person name="Eisen J.A."/>
            <person name="Cavanaugh C.M."/>
        </authorList>
    </citation>
    <scope>NUCLEOTIDE SEQUENCE [LARGE SCALE GENOMIC DNA]</scope>
</reference>
<proteinExistence type="inferred from homology"/>
<gene>
    <name evidence="1" type="primary">aspS</name>
    <name type="ordered locus">Rmag_0396</name>
</gene>